<gene>
    <name type="primary">PA</name>
</gene>
<dbReference type="EMBL" id="CY007624">
    <property type="status" value="NOT_ANNOTATED_CDS"/>
    <property type="molecule type" value="Genomic_RNA"/>
</dbReference>
<dbReference type="SMR" id="P0DJT5"/>
<dbReference type="Proteomes" id="UP000008577">
    <property type="component" value="Genome"/>
</dbReference>
<dbReference type="GO" id="GO:0003723">
    <property type="term" value="F:RNA binding"/>
    <property type="evidence" value="ECO:0007669"/>
    <property type="project" value="InterPro"/>
</dbReference>
<dbReference type="GO" id="GO:0039694">
    <property type="term" value="P:viral RNA genome replication"/>
    <property type="evidence" value="ECO:0007669"/>
    <property type="project" value="InterPro"/>
</dbReference>
<dbReference type="GO" id="GO:0075523">
    <property type="term" value="P:viral translational frameshifting"/>
    <property type="evidence" value="ECO:0007669"/>
    <property type="project" value="UniProtKB-KW"/>
</dbReference>
<dbReference type="FunFam" id="3.40.91.90:FF:000001">
    <property type="entry name" value="Polymerase acidic protein"/>
    <property type="match status" value="1"/>
</dbReference>
<dbReference type="Gene3D" id="3.40.91.90">
    <property type="entry name" value="Influenza RNA-dependent RNA polymerase subunit PA, endonuclease domain"/>
    <property type="match status" value="1"/>
</dbReference>
<dbReference type="InterPro" id="IPR001009">
    <property type="entry name" value="PA/PA-X"/>
</dbReference>
<dbReference type="InterPro" id="IPR038372">
    <property type="entry name" value="PA/PA-X_sf"/>
</dbReference>
<dbReference type="Pfam" id="PF00603">
    <property type="entry name" value="Flu_PA"/>
    <property type="match status" value="1"/>
</dbReference>
<protein>
    <recommendedName>
        <fullName>Protein PA-X</fullName>
    </recommendedName>
</protein>
<organismHost>
    <name type="scientific">Aves</name>
    <dbReference type="NCBI Taxonomy" id="8782"/>
</organismHost>
<organismHost>
    <name type="scientific">Cetacea</name>
    <name type="common">whales</name>
    <dbReference type="NCBI Taxonomy" id="9721"/>
</organismHost>
<organismHost>
    <name type="scientific">Homo sapiens</name>
    <name type="common">Human</name>
    <dbReference type="NCBI Taxonomy" id="9606"/>
</organismHost>
<organismHost>
    <name type="scientific">Phocidae</name>
    <name type="common">true seals</name>
    <dbReference type="NCBI Taxonomy" id="9709"/>
</organismHost>
<organismHost>
    <name type="scientific">Sus scrofa</name>
    <name type="common">Pig</name>
    <dbReference type="NCBI Taxonomy" id="9823"/>
</organismHost>
<organism>
    <name type="scientific">Influenza A virus (strain A/Memphis/4/1980 H3N2)</name>
    <dbReference type="NCBI Taxonomy" id="383578"/>
    <lineage>
        <taxon>Viruses</taxon>
        <taxon>Riboviria</taxon>
        <taxon>Orthornavirae</taxon>
        <taxon>Negarnaviricota</taxon>
        <taxon>Polyploviricotina</taxon>
        <taxon>Insthoviricetes</taxon>
        <taxon>Articulavirales</taxon>
        <taxon>Orthomyxoviridae</taxon>
        <taxon>Alphainfluenzavirus</taxon>
        <taxon>Alphainfluenzavirus influenzae</taxon>
        <taxon>Influenza A virus</taxon>
    </lineage>
</organism>
<comment type="function">
    <text evidence="1 4">Plays a major role in the shutoff of the host protein expression by cleaving mRNAs probably via an endonuclease activity. This host shutoff allows the virus to escape from the host antiviral response (By similarity). Hijacks host RNA splicing machinery to selectively target host RNAs containing introns for destruction. This may explain the preferential degradation of RNAs that have undergone co- or post-transcriptional processing (By similarity).</text>
</comment>
<comment type="subcellular location">
    <subcellularLocation>
        <location evidence="4">Host cytoplasm</location>
    </subcellularLocation>
    <subcellularLocation>
        <location evidence="4">Host nucleus</location>
    </subcellularLocation>
</comment>
<comment type="alternative products">
    <event type="ribosomal frameshifting"/>
    <isoform>
        <id>P0DJT5-1</id>
        <name>PA-X</name>
        <sequence type="displayed"/>
    </isoform>
    <isoform>
        <id>Q2RCG9-1</id>
        <name>PA</name>
        <sequence type="external"/>
    </isoform>
</comment>
<comment type="domain">
    <text evidence="1 4">The probable endonuclease active site in the N-terminus and the basic amino acid cluster in the C-terminus are important for the shutoff activity. The C-terminus acts as a nuclear localization signal (By similarity). The C-terminus is recruited to host protein complexes involved in nuclear Pol II RNA processing (By similarity).</text>
</comment>
<comment type="similarity">
    <text evidence="6">Belongs to the influenza viruses PA-X family.</text>
</comment>
<sequence length="252" mass="29390">MEDFVRQCFNPMIVELAEKAMKEYGEDLKIETNKFAAICTHLEVCFMYSDFHFINEQGESIVVELDDPNALLKHRFEIIEGRDRTMAWTVVNSICNTTGAEKPKFLPDLYDYKENRFIEIGVTRREVHIYYLEKANKIKSENTHIHIFSFTGEEMATKADYTLDEESRARIKTRLFTIRQEMANRGLWDSFVSPKEAKKQLKKNLKSQELCAGLPTKVSRRTSPALRILEPMWMDSNRTAALRASFLKCPKK</sequence>
<proteinExistence type="inferred from homology"/>
<reference key="1">
    <citation type="submission" date="2005-12" db="EMBL/GenBank/DDBJ databases">
        <title>The NIAID influenza genome sequencing project.</title>
        <authorList>
            <person name="Ghedin E."/>
            <person name="Spiro D."/>
            <person name="Miller N."/>
            <person name="Zaborsky J."/>
            <person name="Feldblyum T."/>
            <person name="Subbu V."/>
            <person name="Shumway M."/>
            <person name="Sparenborg J."/>
            <person name="Groveman L."/>
            <person name="Halpin R."/>
            <person name="Sitz J."/>
            <person name="Koo H."/>
            <person name="Salzberg S.L."/>
            <person name="Webster R.G."/>
            <person name="Hoffmann E."/>
            <person name="Krauss S."/>
            <person name="Naeve C."/>
            <person name="Bao Y."/>
            <person name="Bolotov P."/>
            <person name="Dernovoy D."/>
            <person name="Kiryutin B."/>
            <person name="Lipman D.J."/>
            <person name="Tatusova T."/>
        </authorList>
    </citation>
    <scope>NUCLEOTIDE SEQUENCE [GENOMIC RNA]</scope>
</reference>
<name>PAX_I80A4</name>
<accession>P0DJT5</accession>
<feature type="chain" id="PRO_0000419398" description="Protein PA-X">
    <location>
        <begin position="1"/>
        <end position="252"/>
    </location>
</feature>
<feature type="active site" evidence="2">
    <location>
        <position position="80"/>
    </location>
</feature>
<feature type="active site" evidence="2">
    <location>
        <position position="108"/>
    </location>
</feature>
<feature type="site" description="Important for efficient shutoff activity" evidence="5">
    <location>
        <position position="28"/>
    </location>
</feature>
<feature type="site" description="Important for efficient shutoff activity" evidence="5">
    <location>
        <position position="65"/>
    </location>
</feature>
<feature type="site" description="Important for efficient shutoff activity and nuclear localization" evidence="4">
    <location>
        <position position="195"/>
    </location>
</feature>
<feature type="site" description="Important for efficient shutoff activity and nuclear localization" evidence="4">
    <location>
        <position position="198"/>
    </location>
</feature>
<feature type="site" description="Important for efficient shutoff activity and nuclear localization" evidence="4">
    <location>
        <position position="199"/>
    </location>
</feature>
<feature type="site" description="Important for efficient shutoff activity" evidence="3">
    <location>
        <position position="202"/>
    </location>
</feature>
<feature type="site" description="Important for efficient shutoff activity" evidence="3">
    <location>
        <position position="203"/>
    </location>
</feature>
<feature type="site" description="Important for efficient shutoff activity" evidence="3">
    <location>
        <position position="206"/>
    </location>
</feature>
<evidence type="ECO:0000250" key="1">
    <source>
        <dbReference type="UniProtKB" id="P0CK64"/>
    </source>
</evidence>
<evidence type="ECO:0000250" key="2">
    <source>
        <dbReference type="UniProtKB" id="P0CK68"/>
    </source>
</evidence>
<evidence type="ECO:0000250" key="3">
    <source>
        <dbReference type="UniProtKB" id="P0DJW8"/>
    </source>
</evidence>
<evidence type="ECO:0000250" key="4">
    <source>
        <dbReference type="UniProtKB" id="P0DXO5"/>
    </source>
</evidence>
<evidence type="ECO:0000250" key="5">
    <source>
        <dbReference type="UniProtKB" id="P0DXO6"/>
    </source>
</evidence>
<evidence type="ECO:0000305" key="6"/>
<keyword id="KW-1132">Decay of host mRNAs by virus</keyword>
<keyword id="KW-1262">Eukaryotic host gene expression shutoff by virus</keyword>
<keyword id="KW-1035">Host cytoplasm</keyword>
<keyword id="KW-1190">Host gene expression shutoff by virus</keyword>
<keyword id="KW-1192">Host mRNA suppression by virus</keyword>
<keyword id="KW-1048">Host nucleus</keyword>
<keyword id="KW-0945">Host-virus interaction</keyword>
<keyword id="KW-0688">Ribosomal frameshifting</keyword>